<gene>
    <name evidence="5" type="primary">BZIP19</name>
    <name evidence="7" type="ordered locus">At4g35040</name>
    <name evidence="8" type="ORF">M4E13.100</name>
</gene>
<evidence type="ECO:0000255" key="1">
    <source>
        <dbReference type="PROSITE-ProRule" id="PRU00978"/>
    </source>
</evidence>
<evidence type="ECO:0000256" key="2">
    <source>
        <dbReference type="SAM" id="MobiDB-lite"/>
    </source>
</evidence>
<evidence type="ECO:0000269" key="3">
    <source>
    </source>
</evidence>
<evidence type="ECO:0000269" key="4">
    <source>
    </source>
</evidence>
<evidence type="ECO:0000303" key="5">
    <source>
    </source>
</evidence>
<evidence type="ECO:0000305" key="6"/>
<evidence type="ECO:0000312" key="7">
    <source>
        <dbReference type="Araport" id="AT4G35040"/>
    </source>
</evidence>
<evidence type="ECO:0000312" key="8">
    <source>
        <dbReference type="EMBL" id="CAA17769.1"/>
    </source>
</evidence>
<proteinExistence type="evidence at transcript level"/>
<keyword id="KW-0238">DNA-binding</keyword>
<keyword id="KW-0539">Nucleus</keyword>
<keyword id="KW-1185">Reference proteome</keyword>
<keyword id="KW-0804">Transcription</keyword>
<keyword id="KW-0805">Transcription regulation</keyword>
<sequence length="261" mass="28666">MEDGELDFSNQEVFSSSEMGELPPSNCSMDSFFDGLLMDTNAACTHTHTCNPTGPENTHTHTCFHVHTKILPDESDEKVSTDDTAESCGKKGEKRPLGNREAVRKYREKKKAKAASLEDEVARLRAVNQQLVKRLQNQATLEAEVSRLKCLLVDLRGRIDGEIGSFPYQKPMAANIPSFSHMMNPCNVQCDDEVYCPQNVFGVNSQEGASINDQGLSGCDFDQLQCMANQNLNGNGNGSFSNVNTSVSNKRKGGHRASRAV</sequence>
<name>BZP19_ARATH</name>
<dbReference type="EMBL" id="AL022023">
    <property type="protein sequence ID" value="CAA17769.1"/>
    <property type="status" value="ALT_SEQ"/>
    <property type="molecule type" value="Genomic_DNA"/>
</dbReference>
<dbReference type="EMBL" id="AL161586">
    <property type="protein sequence ID" value="CAB80221.1"/>
    <property type="status" value="ALT_SEQ"/>
    <property type="molecule type" value="Genomic_DNA"/>
</dbReference>
<dbReference type="EMBL" id="CP002687">
    <property type="protein sequence ID" value="AEE86454.1"/>
    <property type="molecule type" value="Genomic_DNA"/>
</dbReference>
<dbReference type="EMBL" id="CP002687">
    <property type="protein sequence ID" value="ANM66094.1"/>
    <property type="molecule type" value="Genomic_DNA"/>
</dbReference>
<dbReference type="EMBL" id="CP002687">
    <property type="protein sequence ID" value="ANM66095.1"/>
    <property type="molecule type" value="Genomic_DNA"/>
</dbReference>
<dbReference type="EMBL" id="CP002687">
    <property type="protein sequence ID" value="ANM66096.1"/>
    <property type="molecule type" value="Genomic_DNA"/>
</dbReference>
<dbReference type="EMBL" id="AY072386">
    <property type="protein sequence ID" value="AAL62378.1"/>
    <property type="molecule type" value="mRNA"/>
</dbReference>
<dbReference type="EMBL" id="BT000160">
    <property type="protein sequence ID" value="AAN15479.1"/>
    <property type="molecule type" value="mRNA"/>
</dbReference>
<dbReference type="EMBL" id="AY086153">
    <property type="protein sequence ID" value="AAM63358.1"/>
    <property type="molecule type" value="mRNA"/>
</dbReference>
<dbReference type="PIR" id="T05774">
    <property type="entry name" value="T05774"/>
</dbReference>
<dbReference type="RefSeq" id="NP_001320139.1">
    <property type="nucleotide sequence ID" value="NM_001342321.1"/>
</dbReference>
<dbReference type="RefSeq" id="NP_001328011.1">
    <property type="nucleotide sequence ID" value="NM_001342323.1"/>
</dbReference>
<dbReference type="RefSeq" id="NP_001328012.1">
    <property type="nucleotide sequence ID" value="NM_001342322.1"/>
</dbReference>
<dbReference type="RefSeq" id="NP_567974.1">
    <property type="nucleotide sequence ID" value="NM_119670.5"/>
</dbReference>
<dbReference type="SMR" id="Q8VY76"/>
<dbReference type="FunCoup" id="Q8VY76">
    <property type="interactions" value="1478"/>
</dbReference>
<dbReference type="STRING" id="3702.Q8VY76"/>
<dbReference type="iPTMnet" id="Q8VY76"/>
<dbReference type="PaxDb" id="3702-AT4G35040.1"/>
<dbReference type="ProteomicsDB" id="239104"/>
<dbReference type="EnsemblPlants" id="AT4G35040.1">
    <property type="protein sequence ID" value="AT4G35040.1"/>
    <property type="gene ID" value="AT4G35040"/>
</dbReference>
<dbReference type="EnsemblPlants" id="AT4G35040.2">
    <property type="protein sequence ID" value="AT4G35040.2"/>
    <property type="gene ID" value="AT4G35040"/>
</dbReference>
<dbReference type="EnsemblPlants" id="AT4G35040.3">
    <property type="protein sequence ID" value="AT4G35040.3"/>
    <property type="gene ID" value="AT4G35040"/>
</dbReference>
<dbReference type="EnsemblPlants" id="AT4G35040.4">
    <property type="protein sequence ID" value="AT4G35040.4"/>
    <property type="gene ID" value="AT4G35040"/>
</dbReference>
<dbReference type="GeneID" id="829656"/>
<dbReference type="Gramene" id="AT4G35040.1">
    <property type="protein sequence ID" value="AT4G35040.1"/>
    <property type="gene ID" value="AT4G35040"/>
</dbReference>
<dbReference type="Gramene" id="AT4G35040.2">
    <property type="protein sequence ID" value="AT4G35040.2"/>
    <property type="gene ID" value="AT4G35040"/>
</dbReference>
<dbReference type="Gramene" id="AT4G35040.3">
    <property type="protein sequence ID" value="AT4G35040.3"/>
    <property type="gene ID" value="AT4G35040"/>
</dbReference>
<dbReference type="Gramene" id="AT4G35040.4">
    <property type="protein sequence ID" value="AT4G35040.4"/>
    <property type="gene ID" value="AT4G35040"/>
</dbReference>
<dbReference type="KEGG" id="ath:AT4G35040"/>
<dbReference type="Araport" id="AT4G35040"/>
<dbReference type="TAIR" id="AT4G35040">
    <property type="gene designation" value="BZIP19"/>
</dbReference>
<dbReference type="eggNOG" id="ENOG502QVJ4">
    <property type="taxonomic scope" value="Eukaryota"/>
</dbReference>
<dbReference type="HOGENOM" id="CLU_065260_1_0_1"/>
<dbReference type="InParanoid" id="Q8VY76"/>
<dbReference type="OMA" id="TGPENTH"/>
<dbReference type="PhylomeDB" id="Q8VY76"/>
<dbReference type="PRO" id="PR:Q8VY76"/>
<dbReference type="Proteomes" id="UP000006548">
    <property type="component" value="Chromosome 4"/>
</dbReference>
<dbReference type="ExpressionAtlas" id="Q8VY76">
    <property type="expression patterns" value="baseline and differential"/>
</dbReference>
<dbReference type="GO" id="GO:0005634">
    <property type="term" value="C:nucleus"/>
    <property type="evidence" value="ECO:0000314"/>
    <property type="project" value="TAIR"/>
</dbReference>
<dbReference type="GO" id="GO:0003677">
    <property type="term" value="F:DNA binding"/>
    <property type="evidence" value="ECO:0000314"/>
    <property type="project" value="TAIR"/>
</dbReference>
<dbReference type="GO" id="GO:0003700">
    <property type="term" value="F:DNA-binding transcription factor activity"/>
    <property type="evidence" value="ECO:0000250"/>
    <property type="project" value="TAIR"/>
</dbReference>
<dbReference type="GO" id="GO:0000976">
    <property type="term" value="F:transcription cis-regulatory region binding"/>
    <property type="evidence" value="ECO:0000353"/>
    <property type="project" value="TAIR"/>
</dbReference>
<dbReference type="GO" id="GO:0006351">
    <property type="term" value="P:DNA-templated transcription"/>
    <property type="evidence" value="ECO:0007669"/>
    <property type="project" value="InterPro"/>
</dbReference>
<dbReference type="GO" id="GO:0010043">
    <property type="term" value="P:response to zinc ion"/>
    <property type="evidence" value="ECO:0000270"/>
    <property type="project" value="TAIR"/>
</dbReference>
<dbReference type="CDD" id="cd14686">
    <property type="entry name" value="bZIP"/>
    <property type="match status" value="1"/>
</dbReference>
<dbReference type="FunFam" id="1.20.5.170:FF:000098">
    <property type="entry name" value="Basic leucine zipper 24"/>
    <property type="match status" value="1"/>
</dbReference>
<dbReference type="Gene3D" id="1.20.5.170">
    <property type="match status" value="1"/>
</dbReference>
<dbReference type="InterPro" id="IPR004827">
    <property type="entry name" value="bZIP"/>
</dbReference>
<dbReference type="InterPro" id="IPR046347">
    <property type="entry name" value="bZIP_sf"/>
</dbReference>
<dbReference type="InterPro" id="IPR031106">
    <property type="entry name" value="C/EBP"/>
</dbReference>
<dbReference type="PANTHER" id="PTHR23334:SF48">
    <property type="entry name" value="BASIC LEUCINE ZIPPER 19"/>
    <property type="match status" value="1"/>
</dbReference>
<dbReference type="PANTHER" id="PTHR23334">
    <property type="entry name" value="CCAAT/ENHANCER BINDING PROTEIN"/>
    <property type="match status" value="1"/>
</dbReference>
<dbReference type="Pfam" id="PF07716">
    <property type="entry name" value="bZIP_2"/>
    <property type="match status" value="1"/>
</dbReference>
<dbReference type="SMART" id="SM00338">
    <property type="entry name" value="BRLZ"/>
    <property type="match status" value="1"/>
</dbReference>
<dbReference type="SUPFAM" id="SSF57959">
    <property type="entry name" value="Leucine zipper domain"/>
    <property type="match status" value="1"/>
</dbReference>
<dbReference type="PROSITE" id="PS50217">
    <property type="entry name" value="BZIP"/>
    <property type="match status" value="1"/>
</dbReference>
<reference key="1">
    <citation type="journal article" date="1999" name="Nature">
        <title>Sequence and analysis of chromosome 4 of the plant Arabidopsis thaliana.</title>
        <authorList>
            <person name="Mayer K.F.X."/>
            <person name="Schueller C."/>
            <person name="Wambutt R."/>
            <person name="Murphy G."/>
            <person name="Volckaert G."/>
            <person name="Pohl T."/>
            <person name="Duesterhoeft A."/>
            <person name="Stiekema W."/>
            <person name="Entian K.-D."/>
            <person name="Terryn N."/>
            <person name="Harris B."/>
            <person name="Ansorge W."/>
            <person name="Brandt P."/>
            <person name="Grivell L.A."/>
            <person name="Rieger M."/>
            <person name="Weichselgartner M."/>
            <person name="de Simone V."/>
            <person name="Obermaier B."/>
            <person name="Mache R."/>
            <person name="Mueller M."/>
            <person name="Kreis M."/>
            <person name="Delseny M."/>
            <person name="Puigdomenech P."/>
            <person name="Watson M."/>
            <person name="Schmidtheini T."/>
            <person name="Reichert B."/>
            <person name="Portetelle D."/>
            <person name="Perez-Alonso M."/>
            <person name="Boutry M."/>
            <person name="Bancroft I."/>
            <person name="Vos P."/>
            <person name="Hoheisel J."/>
            <person name="Zimmermann W."/>
            <person name="Wedler H."/>
            <person name="Ridley P."/>
            <person name="Langham S.-A."/>
            <person name="McCullagh B."/>
            <person name="Bilham L."/>
            <person name="Robben J."/>
            <person name="van der Schueren J."/>
            <person name="Grymonprez B."/>
            <person name="Chuang Y.-J."/>
            <person name="Vandenbussche F."/>
            <person name="Braeken M."/>
            <person name="Weltjens I."/>
            <person name="Voet M."/>
            <person name="Bastiaens I."/>
            <person name="Aert R."/>
            <person name="Defoor E."/>
            <person name="Weitzenegger T."/>
            <person name="Bothe G."/>
            <person name="Ramsperger U."/>
            <person name="Hilbert H."/>
            <person name="Braun M."/>
            <person name="Holzer E."/>
            <person name="Brandt A."/>
            <person name="Peters S."/>
            <person name="van Staveren M."/>
            <person name="Dirkse W."/>
            <person name="Mooijman P."/>
            <person name="Klein Lankhorst R."/>
            <person name="Rose M."/>
            <person name="Hauf J."/>
            <person name="Koetter P."/>
            <person name="Berneiser S."/>
            <person name="Hempel S."/>
            <person name="Feldpausch M."/>
            <person name="Lamberth S."/>
            <person name="Van den Daele H."/>
            <person name="De Keyser A."/>
            <person name="Buysshaert C."/>
            <person name="Gielen J."/>
            <person name="Villarroel R."/>
            <person name="De Clercq R."/>
            <person name="van Montagu M."/>
            <person name="Rogers J."/>
            <person name="Cronin A."/>
            <person name="Quail M.A."/>
            <person name="Bray-Allen S."/>
            <person name="Clark L."/>
            <person name="Doggett J."/>
            <person name="Hall S."/>
            <person name="Kay M."/>
            <person name="Lennard N."/>
            <person name="McLay K."/>
            <person name="Mayes R."/>
            <person name="Pettett A."/>
            <person name="Rajandream M.A."/>
            <person name="Lyne M."/>
            <person name="Benes V."/>
            <person name="Rechmann S."/>
            <person name="Borkova D."/>
            <person name="Bloecker H."/>
            <person name="Scharfe M."/>
            <person name="Grimm M."/>
            <person name="Loehnert T.-H."/>
            <person name="Dose S."/>
            <person name="de Haan M."/>
            <person name="Maarse A.C."/>
            <person name="Schaefer M."/>
            <person name="Mueller-Auer S."/>
            <person name="Gabel C."/>
            <person name="Fuchs M."/>
            <person name="Fartmann B."/>
            <person name="Granderath K."/>
            <person name="Dauner D."/>
            <person name="Herzl A."/>
            <person name="Neumann S."/>
            <person name="Argiriou A."/>
            <person name="Vitale D."/>
            <person name="Liguori R."/>
            <person name="Piravandi E."/>
            <person name="Massenet O."/>
            <person name="Quigley F."/>
            <person name="Clabauld G."/>
            <person name="Muendlein A."/>
            <person name="Felber R."/>
            <person name="Schnabl S."/>
            <person name="Hiller R."/>
            <person name="Schmidt W."/>
            <person name="Lecharny A."/>
            <person name="Aubourg S."/>
            <person name="Chefdor F."/>
            <person name="Cooke R."/>
            <person name="Berger C."/>
            <person name="Monfort A."/>
            <person name="Casacuberta E."/>
            <person name="Gibbons T."/>
            <person name="Weber N."/>
            <person name="Vandenbol M."/>
            <person name="Bargues M."/>
            <person name="Terol J."/>
            <person name="Torres A."/>
            <person name="Perez-Perez A."/>
            <person name="Purnelle B."/>
            <person name="Bent E."/>
            <person name="Johnson S."/>
            <person name="Tacon D."/>
            <person name="Jesse T."/>
            <person name="Heijnen L."/>
            <person name="Schwarz S."/>
            <person name="Scholler P."/>
            <person name="Heber S."/>
            <person name="Francs P."/>
            <person name="Bielke C."/>
            <person name="Frishman D."/>
            <person name="Haase D."/>
            <person name="Lemcke K."/>
            <person name="Mewes H.-W."/>
            <person name="Stocker S."/>
            <person name="Zaccaria P."/>
            <person name="Bevan M."/>
            <person name="Wilson R.K."/>
            <person name="de la Bastide M."/>
            <person name="Habermann K."/>
            <person name="Parnell L."/>
            <person name="Dedhia N."/>
            <person name="Gnoj L."/>
            <person name="Schutz K."/>
            <person name="Huang E."/>
            <person name="Spiegel L."/>
            <person name="Sekhon M."/>
            <person name="Murray J."/>
            <person name="Sheet P."/>
            <person name="Cordes M."/>
            <person name="Abu-Threideh J."/>
            <person name="Stoneking T."/>
            <person name="Kalicki J."/>
            <person name="Graves T."/>
            <person name="Harmon G."/>
            <person name="Edwards J."/>
            <person name="Latreille P."/>
            <person name="Courtney L."/>
            <person name="Cloud J."/>
            <person name="Abbott A."/>
            <person name="Scott K."/>
            <person name="Johnson D."/>
            <person name="Minx P."/>
            <person name="Bentley D."/>
            <person name="Fulton B."/>
            <person name="Miller N."/>
            <person name="Greco T."/>
            <person name="Kemp K."/>
            <person name="Kramer J."/>
            <person name="Fulton L."/>
            <person name="Mardis E."/>
            <person name="Dante M."/>
            <person name="Pepin K."/>
            <person name="Hillier L.W."/>
            <person name="Nelson J."/>
            <person name="Spieth J."/>
            <person name="Ryan E."/>
            <person name="Andrews S."/>
            <person name="Geisel C."/>
            <person name="Layman D."/>
            <person name="Du H."/>
            <person name="Ali J."/>
            <person name="Berghoff A."/>
            <person name="Jones K."/>
            <person name="Drone K."/>
            <person name="Cotton M."/>
            <person name="Joshu C."/>
            <person name="Antonoiu B."/>
            <person name="Zidanic M."/>
            <person name="Strong C."/>
            <person name="Sun H."/>
            <person name="Lamar B."/>
            <person name="Yordan C."/>
            <person name="Ma P."/>
            <person name="Zhong J."/>
            <person name="Preston R."/>
            <person name="Vil D."/>
            <person name="Shekher M."/>
            <person name="Matero A."/>
            <person name="Shah R."/>
            <person name="Swaby I.K."/>
            <person name="O'Shaughnessy A."/>
            <person name="Rodriguez M."/>
            <person name="Hoffman J."/>
            <person name="Till S."/>
            <person name="Granat S."/>
            <person name="Shohdy N."/>
            <person name="Hasegawa A."/>
            <person name="Hameed A."/>
            <person name="Lodhi M."/>
            <person name="Johnson A."/>
            <person name="Chen E."/>
            <person name="Marra M.A."/>
            <person name="Martienssen R."/>
            <person name="McCombie W.R."/>
        </authorList>
    </citation>
    <scope>NUCLEOTIDE SEQUENCE [LARGE SCALE GENOMIC DNA]</scope>
    <source>
        <strain>cv. Columbia</strain>
    </source>
</reference>
<reference key="2">
    <citation type="journal article" date="2017" name="Plant J.">
        <title>Araport11: a complete reannotation of the Arabidopsis thaliana reference genome.</title>
        <authorList>
            <person name="Cheng C.Y."/>
            <person name="Krishnakumar V."/>
            <person name="Chan A.P."/>
            <person name="Thibaud-Nissen F."/>
            <person name="Schobel S."/>
            <person name="Town C.D."/>
        </authorList>
    </citation>
    <scope>GENOME REANNOTATION</scope>
    <source>
        <strain>cv. Columbia</strain>
    </source>
</reference>
<reference key="3">
    <citation type="journal article" date="2003" name="Science">
        <title>Empirical analysis of transcriptional activity in the Arabidopsis genome.</title>
        <authorList>
            <person name="Yamada K."/>
            <person name="Lim J."/>
            <person name="Dale J.M."/>
            <person name="Chen H."/>
            <person name="Shinn P."/>
            <person name="Palm C.J."/>
            <person name="Southwick A.M."/>
            <person name="Wu H.C."/>
            <person name="Kim C.J."/>
            <person name="Nguyen M."/>
            <person name="Pham P.K."/>
            <person name="Cheuk R.F."/>
            <person name="Karlin-Newmann G."/>
            <person name="Liu S.X."/>
            <person name="Lam B."/>
            <person name="Sakano H."/>
            <person name="Wu T."/>
            <person name="Yu G."/>
            <person name="Miranda M."/>
            <person name="Quach H.L."/>
            <person name="Tripp M."/>
            <person name="Chang C.H."/>
            <person name="Lee J.M."/>
            <person name="Toriumi M.J."/>
            <person name="Chan M.M."/>
            <person name="Tang C.C."/>
            <person name="Onodera C.S."/>
            <person name="Deng J.M."/>
            <person name="Akiyama K."/>
            <person name="Ansari Y."/>
            <person name="Arakawa T."/>
            <person name="Banh J."/>
            <person name="Banno F."/>
            <person name="Bowser L."/>
            <person name="Brooks S.Y."/>
            <person name="Carninci P."/>
            <person name="Chao Q."/>
            <person name="Choy N."/>
            <person name="Enju A."/>
            <person name="Goldsmith A.D."/>
            <person name="Gurjal M."/>
            <person name="Hansen N.F."/>
            <person name="Hayashizaki Y."/>
            <person name="Johnson-Hopson C."/>
            <person name="Hsuan V.W."/>
            <person name="Iida K."/>
            <person name="Karnes M."/>
            <person name="Khan S."/>
            <person name="Koesema E."/>
            <person name="Ishida J."/>
            <person name="Jiang P.X."/>
            <person name="Jones T."/>
            <person name="Kawai J."/>
            <person name="Kamiya A."/>
            <person name="Meyers C."/>
            <person name="Nakajima M."/>
            <person name="Narusaka M."/>
            <person name="Seki M."/>
            <person name="Sakurai T."/>
            <person name="Satou M."/>
            <person name="Tamse R."/>
            <person name="Vaysberg M."/>
            <person name="Wallender E.K."/>
            <person name="Wong C."/>
            <person name="Yamamura Y."/>
            <person name="Yuan S."/>
            <person name="Shinozaki K."/>
            <person name="Davis R.W."/>
            <person name="Theologis A."/>
            <person name="Ecker J.R."/>
        </authorList>
    </citation>
    <scope>NUCLEOTIDE SEQUENCE [LARGE SCALE MRNA]</scope>
    <source>
        <strain>cv. Columbia</strain>
    </source>
</reference>
<reference key="4">
    <citation type="submission" date="2002-03" db="EMBL/GenBank/DDBJ databases">
        <title>Full-length cDNA from Arabidopsis thaliana.</title>
        <authorList>
            <person name="Brover V.V."/>
            <person name="Troukhan M.E."/>
            <person name="Alexandrov N.A."/>
            <person name="Lu Y.-P."/>
            <person name="Flavell R.B."/>
            <person name="Feldmann K.A."/>
        </authorList>
    </citation>
    <scope>NUCLEOTIDE SEQUENCE [LARGE SCALE MRNA]</scope>
</reference>
<reference key="5">
    <citation type="journal article" date="2002" name="Trends Plant Sci.">
        <title>bZIP transcription factors in Arabidopsis.</title>
        <authorList>
            <person name="Jakoby M."/>
            <person name="Weisshaar B."/>
            <person name="Droege-Laser W."/>
            <person name="Vicente-Carbajosa J."/>
            <person name="Tiedemann J."/>
            <person name="Kroj T."/>
            <person name="Parcy F."/>
        </authorList>
    </citation>
    <scope>GENE FAMILY</scope>
    <scope>NOMENCLATURE</scope>
</reference>
<reference key="6">
    <citation type="journal article" date="2010" name="Proc. Natl. Acad. Sci. U.S.A.">
        <title>Arabidopsis thaliana transcription factors bZIP19 and bZIP23 regulate the adaptation to zinc deficiency.</title>
        <authorList>
            <person name="Assuncao A.G."/>
            <person name="Herrero E."/>
            <person name="Lin Y.F."/>
            <person name="Huettel B."/>
            <person name="Talukdar S."/>
            <person name="Smaczniak C."/>
            <person name="Immink R.G."/>
            <person name="van Eldik M."/>
            <person name="Fiers M."/>
            <person name="Schat H."/>
            <person name="Aarts M.G."/>
        </authorList>
    </citation>
    <scope>FUNCTION</scope>
    <scope>INDUCTION</scope>
    <scope>DISRUPTION PHENOTYPE</scope>
</reference>
<reference key="7">
    <citation type="journal article" date="2015" name="Plant J.">
        <title>Identification of putative target genes of bZIP19, a transcription factor essential for Arabidopsis adaptation to Zn deficiency in roots.</title>
        <authorList>
            <person name="Inaba S."/>
            <person name="Kurata R."/>
            <person name="Kobayashi M."/>
            <person name="Yamagishi Y."/>
            <person name="Mori I."/>
            <person name="Ogata Y."/>
            <person name="Fukao Y."/>
        </authorList>
    </citation>
    <scope>FUNCTION</scope>
    <scope>SUBCELLULAR LOCATION</scope>
    <scope>DISRUPTION PHENOTYPE</scope>
</reference>
<protein>
    <recommendedName>
        <fullName evidence="5">Basic leucine zipper 19</fullName>
        <shortName evidence="5">AtbZIP19</shortName>
        <shortName evidence="6">bZIP protein 19</shortName>
    </recommendedName>
</protein>
<comment type="function">
    <text evidence="3 4">Transcription factor involved in the response to zinc ion deficiency. Binds to the consensus sequence 5'-[AG]TGTCGACA[CT]-3' also called zinc deficiency response element (ZDRE). The ZDRE sequence is conserved in the plant kingdom and present in the promoters of genes that constitute the primary response to zinc deficiency, comprising additional ZIP metal transporter genes (PubMed:20479230, PubMed:26306426). Required for zinc accumulation in roots. Mediates the expression of the zinc transporters ZIP3, ZIP4, ZIP5 and ZIP9 during growth in zinc-deficient conditions. ZIP9 transporter is involved in zinc uptake in roots (PubMed:26306426).</text>
</comment>
<comment type="subcellular location">
    <subcellularLocation>
        <location evidence="1 4">Nucleus</location>
    </subcellularLocation>
</comment>
<comment type="induction">
    <text evidence="3">Induced by zinc deficiency.</text>
</comment>
<comment type="disruption phenotype">
    <text evidence="3 4">No visible phenotype under normal growth conditions (PubMed:20479230, PubMed:26306426). Mutant seedlings grown under normal conditions accumulate reduced levels of zinc in roots. Mutant seedlings grown in zinc-depleted medium have reduced root length (PubMed:26306426).</text>
</comment>
<comment type="sequence caution" evidence="6">
    <conflict type="erroneous gene model prediction">
        <sequence resource="EMBL-CDS" id="CAA17769"/>
    </conflict>
</comment>
<comment type="sequence caution" evidence="6">
    <conflict type="erroneous gene model prediction">
        <sequence resource="EMBL-CDS" id="CAB80221"/>
    </conflict>
</comment>
<organism>
    <name type="scientific">Arabidopsis thaliana</name>
    <name type="common">Mouse-ear cress</name>
    <dbReference type="NCBI Taxonomy" id="3702"/>
    <lineage>
        <taxon>Eukaryota</taxon>
        <taxon>Viridiplantae</taxon>
        <taxon>Streptophyta</taxon>
        <taxon>Embryophyta</taxon>
        <taxon>Tracheophyta</taxon>
        <taxon>Spermatophyta</taxon>
        <taxon>Magnoliopsida</taxon>
        <taxon>eudicotyledons</taxon>
        <taxon>Gunneridae</taxon>
        <taxon>Pentapetalae</taxon>
        <taxon>rosids</taxon>
        <taxon>malvids</taxon>
        <taxon>Brassicales</taxon>
        <taxon>Brassicaceae</taxon>
        <taxon>Camelineae</taxon>
        <taxon>Arabidopsis</taxon>
    </lineage>
</organism>
<accession>Q8VY76</accession>
<accession>O49611</accession>
<accession>Q8LD81</accession>
<feature type="chain" id="PRO_0000435720" description="Basic leucine zipper 19">
    <location>
        <begin position="1"/>
        <end position="261"/>
    </location>
</feature>
<feature type="domain" description="bZIP" evidence="1">
    <location>
        <begin position="89"/>
        <end position="155"/>
    </location>
</feature>
<feature type="region of interest" description="Disordered" evidence="2">
    <location>
        <begin position="1"/>
        <end position="22"/>
    </location>
</feature>
<feature type="region of interest" description="Disordered" evidence="2">
    <location>
        <begin position="74"/>
        <end position="100"/>
    </location>
</feature>
<feature type="region of interest" description="Basic motif" evidence="1">
    <location>
        <begin position="90"/>
        <end position="113"/>
    </location>
</feature>
<feature type="region of interest" description="Leucine-zipper" evidence="1">
    <location>
        <begin position="117"/>
        <end position="131"/>
    </location>
</feature>
<feature type="region of interest" description="Disordered" evidence="2">
    <location>
        <begin position="237"/>
        <end position="261"/>
    </location>
</feature>
<feature type="compositionally biased region" description="Polar residues" evidence="2">
    <location>
        <begin position="8"/>
        <end position="18"/>
    </location>
</feature>
<feature type="compositionally biased region" description="Basic and acidic residues" evidence="2">
    <location>
        <begin position="88"/>
        <end position="100"/>
    </location>
</feature>
<feature type="compositionally biased region" description="Low complexity" evidence="2">
    <location>
        <begin position="237"/>
        <end position="248"/>
    </location>
</feature>
<feature type="compositionally biased region" description="Basic residues" evidence="2">
    <location>
        <begin position="249"/>
        <end position="261"/>
    </location>
</feature>
<feature type="sequence conflict" description="In Ref. 4; AAM63358." evidence="6" ref="4">
    <original>V</original>
    <variation>L</variation>
    <location>
        <position position="127"/>
    </location>
</feature>